<accession>A7MIC1</accession>
<organism>
    <name type="scientific">Cronobacter sakazakii (strain ATCC BAA-894)</name>
    <name type="common">Enterobacter sakazakii</name>
    <dbReference type="NCBI Taxonomy" id="290339"/>
    <lineage>
        <taxon>Bacteria</taxon>
        <taxon>Pseudomonadati</taxon>
        <taxon>Pseudomonadota</taxon>
        <taxon>Gammaproteobacteria</taxon>
        <taxon>Enterobacterales</taxon>
        <taxon>Enterobacteriaceae</taxon>
        <taxon>Cronobacter</taxon>
    </lineage>
</organism>
<dbReference type="EC" id="3.6.4.-" evidence="1"/>
<dbReference type="EMBL" id="CP000783">
    <property type="protein sequence ID" value="ABU78503.1"/>
    <property type="molecule type" value="Genomic_DNA"/>
</dbReference>
<dbReference type="RefSeq" id="WP_012125782.1">
    <property type="nucleotide sequence ID" value="NC_009778.1"/>
</dbReference>
<dbReference type="SMR" id="A7MIC1"/>
<dbReference type="KEGG" id="esa:ESA_03281"/>
<dbReference type="PATRIC" id="fig|290339.8.peg.2909"/>
<dbReference type="HOGENOM" id="CLU_011520_0_0_6"/>
<dbReference type="Proteomes" id="UP000000260">
    <property type="component" value="Chromosome"/>
</dbReference>
<dbReference type="GO" id="GO:0005524">
    <property type="term" value="F:ATP binding"/>
    <property type="evidence" value="ECO:0007669"/>
    <property type="project" value="UniProtKB-UniRule"/>
</dbReference>
<dbReference type="GO" id="GO:0003677">
    <property type="term" value="F:DNA binding"/>
    <property type="evidence" value="ECO:0007669"/>
    <property type="project" value="UniProtKB-KW"/>
</dbReference>
<dbReference type="GO" id="GO:0004386">
    <property type="term" value="F:helicase activity"/>
    <property type="evidence" value="ECO:0007669"/>
    <property type="project" value="UniProtKB-UniRule"/>
</dbReference>
<dbReference type="GO" id="GO:0016817">
    <property type="term" value="F:hydrolase activity, acting on acid anhydrides"/>
    <property type="evidence" value="ECO:0007669"/>
    <property type="project" value="InterPro"/>
</dbReference>
<dbReference type="GO" id="GO:0006355">
    <property type="term" value="P:regulation of DNA-templated transcription"/>
    <property type="evidence" value="ECO:0007669"/>
    <property type="project" value="UniProtKB-UniRule"/>
</dbReference>
<dbReference type="CDD" id="cd18011">
    <property type="entry name" value="DEXDc_RapA"/>
    <property type="match status" value="1"/>
</dbReference>
<dbReference type="CDD" id="cd18793">
    <property type="entry name" value="SF2_C_SNF"/>
    <property type="match status" value="1"/>
</dbReference>
<dbReference type="FunFam" id="3.30.360.80:FF:000001">
    <property type="entry name" value="RNA polymerase-associated protein RapA"/>
    <property type="match status" value="1"/>
</dbReference>
<dbReference type="FunFam" id="3.40.50.10810:FF:000012">
    <property type="entry name" value="RNA polymerase-associated protein RapA"/>
    <property type="match status" value="1"/>
</dbReference>
<dbReference type="FunFam" id="3.40.50.300:FF:000350">
    <property type="entry name" value="RNA polymerase-associated protein RapA"/>
    <property type="match status" value="1"/>
</dbReference>
<dbReference type="Gene3D" id="2.30.30.140">
    <property type="match status" value="1"/>
</dbReference>
<dbReference type="Gene3D" id="2.30.30.930">
    <property type="match status" value="1"/>
</dbReference>
<dbReference type="Gene3D" id="3.30.360.80">
    <property type="match status" value="1"/>
</dbReference>
<dbReference type="Gene3D" id="6.10.140.1500">
    <property type="match status" value="1"/>
</dbReference>
<dbReference type="Gene3D" id="6.10.140.2230">
    <property type="match status" value="1"/>
</dbReference>
<dbReference type="Gene3D" id="3.40.50.300">
    <property type="entry name" value="P-loop containing nucleotide triphosphate hydrolases"/>
    <property type="match status" value="1"/>
</dbReference>
<dbReference type="Gene3D" id="3.40.50.10810">
    <property type="entry name" value="Tandem AAA-ATPase domain"/>
    <property type="match status" value="1"/>
</dbReference>
<dbReference type="HAMAP" id="MF_01821">
    <property type="entry name" value="Helicase_RapA"/>
    <property type="match status" value="1"/>
</dbReference>
<dbReference type="InterPro" id="IPR014001">
    <property type="entry name" value="Helicase_ATP-bd"/>
</dbReference>
<dbReference type="InterPro" id="IPR001650">
    <property type="entry name" value="Helicase_C-like"/>
</dbReference>
<dbReference type="InterPro" id="IPR023949">
    <property type="entry name" value="Helicase_RapA"/>
</dbReference>
<dbReference type="InterPro" id="IPR027417">
    <property type="entry name" value="P-loop_NTPase"/>
</dbReference>
<dbReference type="InterPro" id="IPR022737">
    <property type="entry name" value="RapA_C"/>
</dbReference>
<dbReference type="InterPro" id="IPR038718">
    <property type="entry name" value="SNF2-like_sf"/>
</dbReference>
<dbReference type="InterPro" id="IPR049730">
    <property type="entry name" value="SNF2/RAD54-like_C"/>
</dbReference>
<dbReference type="InterPro" id="IPR000330">
    <property type="entry name" value="SNF2_N"/>
</dbReference>
<dbReference type="InterPro" id="IPR040765">
    <property type="entry name" value="Tudor_1_RapA"/>
</dbReference>
<dbReference type="InterPro" id="IPR040766">
    <property type="entry name" value="Tudor_2_RapA"/>
</dbReference>
<dbReference type="NCBIfam" id="NF003426">
    <property type="entry name" value="PRK04914.1"/>
    <property type="match status" value="1"/>
</dbReference>
<dbReference type="PANTHER" id="PTHR45766">
    <property type="entry name" value="DNA ANNEALING HELICASE AND ENDONUCLEASE ZRANB3 FAMILY MEMBER"/>
    <property type="match status" value="1"/>
</dbReference>
<dbReference type="PANTHER" id="PTHR45766:SF6">
    <property type="entry name" value="SWI_SNF-RELATED MATRIX-ASSOCIATED ACTIN-DEPENDENT REGULATOR OF CHROMATIN SUBFAMILY A-LIKE PROTEIN 1"/>
    <property type="match status" value="1"/>
</dbReference>
<dbReference type="Pfam" id="PF00271">
    <property type="entry name" value="Helicase_C"/>
    <property type="match status" value="1"/>
</dbReference>
<dbReference type="Pfam" id="PF12137">
    <property type="entry name" value="RapA_C"/>
    <property type="match status" value="1"/>
</dbReference>
<dbReference type="Pfam" id="PF00176">
    <property type="entry name" value="SNF2-rel_dom"/>
    <property type="match status" value="1"/>
</dbReference>
<dbReference type="Pfam" id="PF18339">
    <property type="entry name" value="Tudor_1_RapA"/>
    <property type="match status" value="1"/>
</dbReference>
<dbReference type="Pfam" id="PF18337">
    <property type="entry name" value="Tudor_RapA"/>
    <property type="match status" value="1"/>
</dbReference>
<dbReference type="SMART" id="SM00487">
    <property type="entry name" value="DEXDc"/>
    <property type="match status" value="1"/>
</dbReference>
<dbReference type="SMART" id="SM00490">
    <property type="entry name" value="HELICc"/>
    <property type="match status" value="1"/>
</dbReference>
<dbReference type="SUPFAM" id="SSF52540">
    <property type="entry name" value="P-loop containing nucleoside triphosphate hydrolases"/>
    <property type="match status" value="2"/>
</dbReference>
<dbReference type="PROSITE" id="PS51192">
    <property type="entry name" value="HELICASE_ATP_BIND_1"/>
    <property type="match status" value="1"/>
</dbReference>
<dbReference type="PROSITE" id="PS51194">
    <property type="entry name" value="HELICASE_CTER"/>
    <property type="match status" value="1"/>
</dbReference>
<proteinExistence type="inferred from homology"/>
<comment type="function">
    <text evidence="1">Transcription regulator that activates transcription by stimulating RNA polymerase (RNAP) recycling in case of stress conditions such as supercoiled DNA or high salt concentrations. Probably acts by releasing the RNAP, when it is trapped or immobilized on tightly supercoiled DNA. Does not activate transcription on linear DNA. Probably not involved in DNA repair.</text>
</comment>
<comment type="subunit">
    <text evidence="1">Interacts with the RNAP. Has a higher affinity for the core RNAP than for the holoenzyme. Its ATPase activity is stimulated by binding to RNAP.</text>
</comment>
<comment type="similarity">
    <text evidence="1">Belongs to the SNF2/RAD54 helicase family. RapA subfamily.</text>
</comment>
<sequence>MPFTLGQRWISDTESELGLGTVVAIDARMVTLLFPATGENRLYARNDSPVTRVMFNPGDTVTSHEGWQLKVDEVKEENGLLIYIGTRLDTLEENVALREVFLDSKLVFSKPQDRLFAGQIDRMDRFALRYRARKYQSEQYRMPWSGLRGQRTNLIPHQLNIANDVGRRHAPRVLLADEVGLGKTIEAGMIIHQQLLAGAAERVLIVVPETLQHQWLVEMLRRFNLRFSLFDDERYAEAQHESDNPFDTEQLVICSLDFVRRNKQRLEHLCDAEWDLLVVDEAHHLVWSEDAPSREYQAIEQLAERVPGVLLLTATPEQLGMESHFARLRLLDPNRFHDFAQFVEEQQNYRPVADAVALLLAGTHLSDEQLNTLSELIGEQDIEPLLQTANSDRDGAESARQELVSMLMDRHGTSRVLFRNTRNGVKGFPQRELHTIKLPLPTQYQTAIKVSGIMGARKSAEERARDMLYPEQIYQEFEGDSGTWWNFDPRVEWLMGYLTSHRSQKVLVICAKAATALQLEQVLREREGIRAAVFHEGMSIIERDRAAAWFAEEDTGAQVLLCSEIGSEGRNFQFASQLVMFDLPFNPDLLEQRIGRLDRIGQAHDIQIHVPYLEKTAQSVLVRWYHEGLDAFEHTCPTGRAIYDSVYEQLIGYLAAPENTEGFDALIQACRKQHDELKAQLEQGRDRLLEIHSNGGEKAQQLADAIAEQDDDTGLVNFAMNLFDIVGINQDDRGEHMIVLTPSDHMLVPDFPGLPEDGCTITFNRDVALSREDAQFITWEHPLIRNGLDLILSGDTGSCTISLLKNKALPVGTLLLELIYVVEAKAPKQLQLNRFLPPTPVRMLLDKNGNNLAGQVEFESFNRQLSAVNRHTGSKLVNAVQQEVHAILQGGEAQVEKAARELIDAARQEADDKLSAELSRLEALRAVNPNIRDDELAAIEHNRQQVLENLNQASWRLDALRLIVVTHQ</sequence>
<name>RAPA_CROS8</name>
<protein>
    <recommendedName>
        <fullName evidence="1">RNA polymerase-associated protein RapA</fullName>
        <ecNumber evidence="1">3.6.4.-</ecNumber>
    </recommendedName>
    <alternativeName>
        <fullName evidence="1">ATP-dependent helicase HepA</fullName>
    </alternativeName>
</protein>
<keyword id="KW-0010">Activator</keyword>
<keyword id="KW-0067">ATP-binding</keyword>
<keyword id="KW-0238">DNA-binding</keyword>
<keyword id="KW-0347">Helicase</keyword>
<keyword id="KW-0378">Hydrolase</keyword>
<keyword id="KW-0547">Nucleotide-binding</keyword>
<keyword id="KW-1185">Reference proteome</keyword>
<keyword id="KW-0804">Transcription</keyword>
<keyword id="KW-0805">Transcription regulation</keyword>
<gene>
    <name evidence="1" type="primary">rapA</name>
    <name type="ordered locus">ESA_03281</name>
</gene>
<reference key="1">
    <citation type="journal article" date="2010" name="PLoS ONE">
        <title>Genome sequence of Cronobacter sakazakii BAA-894 and comparative genomic hybridization analysis with other Cronobacter species.</title>
        <authorList>
            <person name="Kucerova E."/>
            <person name="Clifton S.W."/>
            <person name="Xia X.Q."/>
            <person name="Long F."/>
            <person name="Porwollik S."/>
            <person name="Fulton L."/>
            <person name="Fronick C."/>
            <person name="Minx P."/>
            <person name="Kyung K."/>
            <person name="Warren W."/>
            <person name="Fulton R."/>
            <person name="Feng D."/>
            <person name="Wollam A."/>
            <person name="Shah N."/>
            <person name="Bhonagiri V."/>
            <person name="Nash W.E."/>
            <person name="Hallsworth-Pepin K."/>
            <person name="Wilson R.K."/>
            <person name="McClelland M."/>
            <person name="Forsythe S.J."/>
        </authorList>
    </citation>
    <scope>NUCLEOTIDE SEQUENCE [LARGE SCALE GENOMIC DNA]</scope>
    <source>
        <strain>ATCC BAA-894</strain>
    </source>
</reference>
<feature type="chain" id="PRO_1000088358" description="RNA polymerase-associated protein RapA">
    <location>
        <begin position="1"/>
        <end position="968"/>
    </location>
</feature>
<feature type="domain" description="Helicase ATP-binding" evidence="1">
    <location>
        <begin position="164"/>
        <end position="334"/>
    </location>
</feature>
<feature type="domain" description="Helicase C-terminal" evidence="1">
    <location>
        <begin position="490"/>
        <end position="662"/>
    </location>
</feature>
<feature type="short sequence motif" description="DEAH box">
    <location>
        <begin position="280"/>
        <end position="283"/>
    </location>
</feature>
<feature type="binding site" evidence="1">
    <location>
        <begin position="177"/>
        <end position="184"/>
    </location>
    <ligand>
        <name>ATP</name>
        <dbReference type="ChEBI" id="CHEBI:30616"/>
    </ligand>
</feature>
<evidence type="ECO:0000255" key="1">
    <source>
        <dbReference type="HAMAP-Rule" id="MF_01821"/>
    </source>
</evidence>